<proteinExistence type="inferred from homology"/>
<name>UFOG_HORVU</name>
<dbReference type="EC" id="2.4.1.115"/>
<dbReference type="EMBL" id="X15694">
    <property type="protein sequence ID" value="CAA33729.1"/>
    <property type="molecule type" value="Genomic_DNA"/>
</dbReference>
<dbReference type="PIR" id="S14919">
    <property type="entry name" value="XUBHFG"/>
</dbReference>
<dbReference type="SMR" id="P14726"/>
<dbReference type="CAZy" id="GT1">
    <property type="family name" value="Glycosyltransferase Family 1"/>
</dbReference>
<dbReference type="UniPathway" id="UPA00009"/>
<dbReference type="ExpressionAtlas" id="P14726">
    <property type="expression patterns" value="differential"/>
</dbReference>
<dbReference type="GO" id="GO:0047213">
    <property type="term" value="F:anthocyanidin 3-O-glucosyltransferase activity"/>
    <property type="evidence" value="ECO:0007669"/>
    <property type="project" value="UniProtKB-EC"/>
</dbReference>
<dbReference type="GO" id="GO:0009718">
    <property type="term" value="P:anthocyanin-containing compound biosynthetic process"/>
    <property type="evidence" value="ECO:0007669"/>
    <property type="project" value="UniProtKB-UniPathway"/>
</dbReference>
<dbReference type="CDD" id="cd03784">
    <property type="entry name" value="GT1_Gtf-like"/>
    <property type="match status" value="1"/>
</dbReference>
<dbReference type="FunFam" id="3.40.50.2000:FF:000060">
    <property type="entry name" value="Glycosyltransferase"/>
    <property type="match status" value="1"/>
</dbReference>
<dbReference type="Gene3D" id="3.40.50.2000">
    <property type="entry name" value="Glycogen Phosphorylase B"/>
    <property type="match status" value="2"/>
</dbReference>
<dbReference type="InterPro" id="IPR050481">
    <property type="entry name" value="UDP-glycosyltransf_plant"/>
</dbReference>
<dbReference type="InterPro" id="IPR002213">
    <property type="entry name" value="UDP_glucos_trans"/>
</dbReference>
<dbReference type="InterPro" id="IPR035595">
    <property type="entry name" value="UDP_glycos_trans_CS"/>
</dbReference>
<dbReference type="PANTHER" id="PTHR48049:SF65">
    <property type="entry name" value="ANTHOCYANIDIN 3-O-GLUCOSYLTRANSFERASE"/>
    <property type="match status" value="1"/>
</dbReference>
<dbReference type="PANTHER" id="PTHR48049">
    <property type="entry name" value="GLYCOSYLTRANSFERASE"/>
    <property type="match status" value="1"/>
</dbReference>
<dbReference type="Pfam" id="PF00201">
    <property type="entry name" value="UDPGT"/>
    <property type="match status" value="1"/>
</dbReference>
<dbReference type="SUPFAM" id="SSF53756">
    <property type="entry name" value="UDP-Glycosyltransferase/glycogen phosphorylase"/>
    <property type="match status" value="1"/>
</dbReference>
<dbReference type="PROSITE" id="PS00375">
    <property type="entry name" value="UDPGT"/>
    <property type="match status" value="1"/>
</dbReference>
<reference key="1">
    <citation type="journal article" date="1990" name="Plant Mol. Biol.">
        <title>Nucleotide sequence of the Bronze-1 homologous gene from Hordeum vulgare.</title>
        <authorList>
            <person name="Wise R.P."/>
            <person name="Rohde W."/>
            <person name="Salamini F."/>
        </authorList>
    </citation>
    <scope>NUCLEOTIDE SEQUENCE [GENOMIC DNA]</scope>
    <source>
        <strain>cv. Abyssinian 2231</strain>
    </source>
</reference>
<evidence type="ECO:0000250" key="1">
    <source>
        <dbReference type="UniProtKB" id="A0A0A1HA03"/>
    </source>
</evidence>
<evidence type="ECO:0000250" key="2">
    <source>
        <dbReference type="UniProtKB" id="P51094"/>
    </source>
</evidence>
<evidence type="ECO:0000305" key="3"/>
<accession>P14726</accession>
<sequence length="455" mass="47080">MAPPPPHIAVVAFPFSSHAAVLFSFARALAAAAPAGTSLSFLTTADNAAQLRKAGALPGNLRFVEVPDGVPPGETSCLSPPRRMDLFMAAAEAGGVRVGLEAACASAGGARVSCVVGDAFVWTADAASAAGAPWVAVWTAASCALLAHLRTDALRRDVGDQAASRADELLVAHAGLGGYRVRDLPDGVVSGDFNYVISLLVHRQAQRLPKAATAVALNTFPGLDPPDLIAALAAELPNCLPLGPYHLLPGAEPTADTNEAPADPHGCLAWLDRRPARSVAYVSFGTNATARPDELQELAAGLEASGAPFLWSLRGVVAAAPRGFLERAPGLVVPWAPQVGVLRHAAVGAFVTHAGWASVMEGVSSGVPMACRPFFGDQTMNARSVASVWGFGTAFDGPMTRGAVANAVATLLRGEDGERMRAKAQELQAMVGKAFEPDGGCRKNFDEFVEIVCRV</sequence>
<protein>
    <recommendedName>
        <fullName>Anthocyanidin 3-O-glucosyltransferase</fullName>
        <ecNumber>2.4.1.115</ecNumber>
    </recommendedName>
    <alternativeName>
        <fullName>Bronze-1</fullName>
    </alternativeName>
    <alternativeName>
        <fullName>Flavonol 3-O-glucosyltransferase</fullName>
    </alternativeName>
    <alternativeName>
        <fullName>UDP-glucose flavonoid 3-O-glucosyltransferase</fullName>
    </alternativeName>
</protein>
<comment type="function">
    <text>In the presence of other necessary color factors, this glycosylation reaction allows the accumulation of anthocyanin pigments.</text>
</comment>
<comment type="catalytic activity">
    <reaction>
        <text>an anthocyanidin + UDP-alpha-D-glucose + H(+) = an anthocyanidin 3-O-beta-D-glucoside + UDP</text>
        <dbReference type="Rhea" id="RHEA:20093"/>
        <dbReference type="ChEBI" id="CHEBI:15378"/>
        <dbReference type="ChEBI" id="CHEBI:16307"/>
        <dbReference type="ChEBI" id="CHEBI:58223"/>
        <dbReference type="ChEBI" id="CHEBI:58885"/>
        <dbReference type="ChEBI" id="CHEBI:143576"/>
        <dbReference type="EC" id="2.4.1.115"/>
    </reaction>
</comment>
<comment type="pathway">
    <text>Pigment biosynthesis; anthocyanin biosynthesis.</text>
</comment>
<comment type="similarity">
    <text evidence="3">Belongs to the UDP-glycosyltransferase family.</text>
</comment>
<organism>
    <name type="scientific">Hordeum vulgare</name>
    <name type="common">Barley</name>
    <dbReference type="NCBI Taxonomy" id="4513"/>
    <lineage>
        <taxon>Eukaryota</taxon>
        <taxon>Viridiplantae</taxon>
        <taxon>Streptophyta</taxon>
        <taxon>Embryophyta</taxon>
        <taxon>Tracheophyta</taxon>
        <taxon>Spermatophyta</taxon>
        <taxon>Magnoliopsida</taxon>
        <taxon>Liliopsida</taxon>
        <taxon>Poales</taxon>
        <taxon>Poaceae</taxon>
        <taxon>BOP clade</taxon>
        <taxon>Pooideae</taxon>
        <taxon>Triticodae</taxon>
        <taxon>Triticeae</taxon>
        <taxon>Hordeinae</taxon>
        <taxon>Hordeum</taxon>
    </lineage>
</organism>
<gene>
    <name type="primary">BZ1</name>
    <name type="synonym">UGT71A2</name>
</gene>
<keyword id="KW-0328">Glycosyltransferase</keyword>
<keyword id="KW-0808">Transferase</keyword>
<feature type="chain" id="PRO_0000074142" description="Anthocyanidin 3-O-glucosyltransferase">
    <location>
        <begin position="1"/>
        <end position="455"/>
    </location>
</feature>
<feature type="active site" description="Proton acceptor" evidence="1">
    <location>
        <position position="18"/>
    </location>
</feature>
<feature type="active site" description="Charge relay" evidence="1">
    <location>
        <position position="118"/>
    </location>
</feature>
<feature type="binding site" evidence="2">
    <location>
        <position position="18"/>
    </location>
    <ligand>
        <name>an anthocyanidin</name>
        <dbReference type="ChEBI" id="CHEBI:143576"/>
    </ligand>
</feature>
<feature type="binding site" evidence="1">
    <location>
        <position position="139"/>
    </location>
    <ligand>
        <name>UDP-alpha-D-glucose</name>
        <dbReference type="ChEBI" id="CHEBI:58885"/>
    </ligand>
</feature>
<feature type="binding site" evidence="2">
    <location>
        <position position="148"/>
    </location>
    <ligand>
        <name>an anthocyanidin</name>
        <dbReference type="ChEBI" id="CHEBI:143576"/>
    </ligand>
</feature>
<feature type="binding site" evidence="1">
    <location>
        <position position="336"/>
    </location>
    <ligand>
        <name>UDP-alpha-D-glucose</name>
        <dbReference type="ChEBI" id="CHEBI:58885"/>
    </ligand>
</feature>
<feature type="binding site" evidence="1">
    <location>
        <position position="338"/>
    </location>
    <ligand>
        <name>UDP-alpha-D-glucose</name>
        <dbReference type="ChEBI" id="CHEBI:58885"/>
    </ligand>
</feature>
<feature type="binding site" evidence="1">
    <location>
        <position position="353"/>
    </location>
    <ligand>
        <name>UDP-alpha-D-glucose</name>
        <dbReference type="ChEBI" id="CHEBI:58885"/>
    </ligand>
</feature>
<feature type="binding site" evidence="1">
    <location>
        <position position="356"/>
    </location>
    <ligand>
        <name>UDP-alpha-D-glucose</name>
        <dbReference type="ChEBI" id="CHEBI:58885"/>
    </ligand>
</feature>
<feature type="binding site" evidence="1">
    <location>
        <position position="358"/>
    </location>
    <ligand>
        <name>UDP-alpha-D-glucose</name>
        <dbReference type="ChEBI" id="CHEBI:58885"/>
    </ligand>
</feature>
<feature type="binding site" evidence="1">
    <location>
        <position position="361"/>
    </location>
    <ligand>
        <name>UDP-alpha-D-glucose</name>
        <dbReference type="ChEBI" id="CHEBI:58885"/>
    </ligand>
</feature>
<feature type="binding site" evidence="2">
    <location>
        <position position="376"/>
    </location>
    <ligand>
        <name>an anthocyanidin</name>
        <dbReference type="ChEBI" id="CHEBI:143576"/>
    </ligand>
</feature>
<feature type="binding site" evidence="1">
    <location>
        <position position="377"/>
    </location>
    <ligand>
        <name>UDP-alpha-D-glucose</name>
        <dbReference type="ChEBI" id="CHEBI:58885"/>
    </ligand>
</feature>
<feature type="binding site" evidence="1">
    <location>
        <position position="378"/>
    </location>
    <ligand>
        <name>UDP-alpha-D-glucose</name>
        <dbReference type="ChEBI" id="CHEBI:58885"/>
    </ligand>
</feature>